<proteinExistence type="evidence at protein level"/>
<reference key="1">
    <citation type="journal article" date="1981" name="Cell">
        <title>Structure and evolution of goat gamma-, beta C- and beta A-globin genes: three developmentally regulated genes contain inserted elements.</title>
        <authorList>
            <person name="Schon E.A."/>
            <person name="Cleary M.L."/>
            <person name="Haynes J.R."/>
            <person name="Lingrel J.B."/>
        </authorList>
    </citation>
    <scope>NUCLEOTIDE SEQUENCE [GENOMIC DNA]</scope>
</reference>
<reference key="2">
    <citation type="journal article" date="1982" name="Hoppe-Seyler's Z. Physiol. Chem.">
        <title>The primary structure of the hemoglobin gamma-chains of fetal sheep (Ovis ammon) and goat (Capra aegagrus), Artiodactyla.</title>
        <authorList>
            <person name="Kleinschmidt T."/>
            <person name="Braunitzer G."/>
        </authorList>
    </citation>
    <scope>PROTEIN SEQUENCE</scope>
</reference>
<reference key="3">
    <citation type="journal article" date="1980" name="J. Biol. Chem.">
        <title>The isolation of the beta A-, beta C-, and gamma-globin genes and a presumptive embryonic globin gene from a goat DNA recombinant library.</title>
        <authorList>
            <person name="Haynes J.R."/>
            <person name="Rosteck P.R. Jr."/>
            <person name="Schon E.A."/>
            <person name="Gallagher P.M."/>
            <person name="Burks D.J."/>
            <person name="Smith K."/>
            <person name="Lingrel J.B."/>
        </authorList>
    </citation>
    <scope>NUCLEOTIDE SEQUENCE [GENOMIC DNA] OF 52-97</scope>
</reference>
<organism>
    <name type="scientific">Capra hircus</name>
    <name type="common">Goat</name>
    <dbReference type="NCBI Taxonomy" id="9925"/>
    <lineage>
        <taxon>Eukaryota</taxon>
        <taxon>Metazoa</taxon>
        <taxon>Chordata</taxon>
        <taxon>Craniata</taxon>
        <taxon>Vertebrata</taxon>
        <taxon>Euteleostomi</taxon>
        <taxon>Mammalia</taxon>
        <taxon>Eutheria</taxon>
        <taxon>Laurasiatheria</taxon>
        <taxon>Artiodactyla</taxon>
        <taxon>Ruminantia</taxon>
        <taxon>Pecora</taxon>
        <taxon>Bovidae</taxon>
        <taxon>Caprinae</taxon>
        <taxon>Capra</taxon>
    </lineage>
</organism>
<sequence>MLSAEEKASVLSLFAKVNVEEVGGEALGRLLVVYPWTQRFFEHFGDLSSADAILGNPKVKAHGKKVLDTFSEGLKQLDDLKGAFASLSELHCDKLHVDPENFRLLGNVLVVVLARRFGGEFTPELQANFQKVVTGVANALAHRYH</sequence>
<name>HBBF_CAPHI</name>
<evidence type="ECO:0000255" key="1">
    <source>
        <dbReference type="PROSITE-ProRule" id="PRU00238"/>
    </source>
</evidence>
<comment type="function">
    <text>Involved in oxygen transport from the lung to the various peripheral tissues.</text>
</comment>
<comment type="subunit">
    <text>Heterotetramer of two alpha chains and two beta chains.</text>
</comment>
<comment type="tissue specificity">
    <text>Red blood cells.</text>
</comment>
<comment type="similarity">
    <text evidence="1">Belongs to the globin family.</text>
</comment>
<dbReference type="EMBL" id="M15388">
    <property type="protein sequence ID" value="AAA30925.1"/>
    <property type="molecule type" value="Genomic_DNA"/>
</dbReference>
<dbReference type="EMBL" id="K00663">
    <property type="protein sequence ID" value="AAA30923.1"/>
    <property type="molecule type" value="Genomic_DNA"/>
</dbReference>
<dbReference type="PIR" id="A02399">
    <property type="entry name" value="HBGTF"/>
</dbReference>
<dbReference type="RefSeq" id="XP_005689873.1">
    <property type="nucleotide sequence ID" value="XM_005689816.3"/>
</dbReference>
<dbReference type="SMR" id="P02082"/>
<dbReference type="STRING" id="9925.ENSCHIP00000027410"/>
<dbReference type="Ensembl" id="ENSCHIT00000035278.1">
    <property type="protein sequence ID" value="ENSCHIP00000027410.1"/>
    <property type="gene ID" value="ENSCHIG00000023338.1"/>
</dbReference>
<dbReference type="Ensembl" id="ENSCHIT00020061106">
    <property type="protein sequence ID" value="ENSCHIP00020047127"/>
    <property type="gene ID" value="ENSCHIG00020029522"/>
</dbReference>
<dbReference type="Ensembl" id="ENSCHIT00040051616">
    <property type="protein sequence ID" value="ENSCHIP00040041712"/>
    <property type="gene ID" value="ENSCHIG00040023889"/>
</dbReference>
<dbReference type="GeneID" id="102176710"/>
<dbReference type="KEGG" id="chx:102176710"/>
<dbReference type="GeneTree" id="ENSGT00940000156216"/>
<dbReference type="OMA" id="WTQRYFP"/>
<dbReference type="OrthoDB" id="9886081at2759"/>
<dbReference type="Proteomes" id="UP000291000">
    <property type="component" value="Chromosome 15"/>
</dbReference>
<dbReference type="Proteomes" id="UP000694566">
    <property type="component" value="Unplaced"/>
</dbReference>
<dbReference type="Bgee" id="ENSCHIG00000023338">
    <property type="expression patterns" value="Expressed in metanephros cortex and 11 other cell types or tissues"/>
</dbReference>
<dbReference type="GO" id="GO:0072562">
    <property type="term" value="C:blood microparticle"/>
    <property type="evidence" value="ECO:0007669"/>
    <property type="project" value="TreeGrafter"/>
</dbReference>
<dbReference type="GO" id="GO:0031838">
    <property type="term" value="C:haptoglobin-hemoglobin complex"/>
    <property type="evidence" value="ECO:0007669"/>
    <property type="project" value="TreeGrafter"/>
</dbReference>
<dbReference type="GO" id="GO:0005833">
    <property type="term" value="C:hemoglobin complex"/>
    <property type="evidence" value="ECO:0007669"/>
    <property type="project" value="InterPro"/>
</dbReference>
<dbReference type="GO" id="GO:0031720">
    <property type="term" value="F:haptoglobin binding"/>
    <property type="evidence" value="ECO:0007669"/>
    <property type="project" value="TreeGrafter"/>
</dbReference>
<dbReference type="GO" id="GO:0020037">
    <property type="term" value="F:heme binding"/>
    <property type="evidence" value="ECO:0007669"/>
    <property type="project" value="InterPro"/>
</dbReference>
<dbReference type="GO" id="GO:0031721">
    <property type="term" value="F:hemoglobin alpha binding"/>
    <property type="evidence" value="ECO:0007669"/>
    <property type="project" value="TreeGrafter"/>
</dbReference>
<dbReference type="GO" id="GO:0046872">
    <property type="term" value="F:metal ion binding"/>
    <property type="evidence" value="ECO:0007669"/>
    <property type="project" value="UniProtKB-KW"/>
</dbReference>
<dbReference type="GO" id="GO:0043177">
    <property type="term" value="F:organic acid binding"/>
    <property type="evidence" value="ECO:0007669"/>
    <property type="project" value="TreeGrafter"/>
</dbReference>
<dbReference type="GO" id="GO:0019825">
    <property type="term" value="F:oxygen binding"/>
    <property type="evidence" value="ECO:0007669"/>
    <property type="project" value="InterPro"/>
</dbReference>
<dbReference type="GO" id="GO:0005344">
    <property type="term" value="F:oxygen carrier activity"/>
    <property type="evidence" value="ECO:0007669"/>
    <property type="project" value="UniProtKB-KW"/>
</dbReference>
<dbReference type="GO" id="GO:0004601">
    <property type="term" value="F:peroxidase activity"/>
    <property type="evidence" value="ECO:0007669"/>
    <property type="project" value="TreeGrafter"/>
</dbReference>
<dbReference type="GO" id="GO:0042744">
    <property type="term" value="P:hydrogen peroxide catabolic process"/>
    <property type="evidence" value="ECO:0007669"/>
    <property type="project" value="TreeGrafter"/>
</dbReference>
<dbReference type="CDD" id="cd08925">
    <property type="entry name" value="Hb-beta-like"/>
    <property type="match status" value="1"/>
</dbReference>
<dbReference type="FunFam" id="1.10.490.10:FF:000001">
    <property type="entry name" value="Hemoglobin subunit beta"/>
    <property type="match status" value="1"/>
</dbReference>
<dbReference type="Gene3D" id="1.10.490.10">
    <property type="entry name" value="Globins"/>
    <property type="match status" value="1"/>
</dbReference>
<dbReference type="InterPro" id="IPR000971">
    <property type="entry name" value="Globin"/>
</dbReference>
<dbReference type="InterPro" id="IPR009050">
    <property type="entry name" value="Globin-like_sf"/>
</dbReference>
<dbReference type="InterPro" id="IPR012292">
    <property type="entry name" value="Globin/Proto"/>
</dbReference>
<dbReference type="InterPro" id="IPR002337">
    <property type="entry name" value="Hemoglobin_b"/>
</dbReference>
<dbReference type="InterPro" id="IPR050056">
    <property type="entry name" value="Hemoglobin_oxygen_transport"/>
</dbReference>
<dbReference type="PANTHER" id="PTHR11442">
    <property type="entry name" value="HEMOGLOBIN FAMILY MEMBER"/>
    <property type="match status" value="1"/>
</dbReference>
<dbReference type="PANTHER" id="PTHR11442:SF42">
    <property type="entry name" value="HEMOGLOBIN SUBUNIT BETA"/>
    <property type="match status" value="1"/>
</dbReference>
<dbReference type="Pfam" id="PF00042">
    <property type="entry name" value="Globin"/>
    <property type="match status" value="1"/>
</dbReference>
<dbReference type="PRINTS" id="PR00814">
    <property type="entry name" value="BETAHAEM"/>
</dbReference>
<dbReference type="SUPFAM" id="SSF46458">
    <property type="entry name" value="Globin-like"/>
    <property type="match status" value="1"/>
</dbReference>
<dbReference type="PROSITE" id="PS01033">
    <property type="entry name" value="GLOBIN"/>
    <property type="match status" value="1"/>
</dbReference>
<protein>
    <recommendedName>
        <fullName>Hemoglobin fetal subunit beta</fullName>
    </recommendedName>
    <alternativeName>
        <fullName>Beta-globin, fetal</fullName>
    </alternativeName>
    <alternativeName>
        <fullName>Hemoglobin beta chain, fetal</fullName>
    </alternativeName>
    <alternativeName>
        <fullName>Hemoglobin gamma chain</fullName>
    </alternativeName>
</protein>
<accession>P02082</accession>
<feature type="chain" id="PRO_0000052911" description="Hemoglobin fetal subunit beta">
    <location>
        <begin position="1"/>
        <end position="145"/>
    </location>
</feature>
<feature type="domain" description="Globin" evidence="1">
    <location>
        <begin position="1"/>
        <end position="145"/>
    </location>
</feature>
<feature type="binding site" description="distal binding residue">
    <location>
        <position position="62"/>
    </location>
    <ligand>
        <name>heme b</name>
        <dbReference type="ChEBI" id="CHEBI:60344"/>
    </ligand>
    <ligandPart>
        <name>Fe</name>
        <dbReference type="ChEBI" id="CHEBI:18248"/>
    </ligandPart>
</feature>
<feature type="binding site" description="proximal binding residue">
    <location>
        <position position="91"/>
    </location>
    <ligand>
        <name>heme b</name>
        <dbReference type="ChEBI" id="CHEBI:60344"/>
    </ligand>
    <ligandPart>
        <name>Fe</name>
        <dbReference type="ChEBI" id="CHEBI:18248"/>
    </ligandPart>
</feature>
<keyword id="KW-0903">Direct protein sequencing</keyword>
<keyword id="KW-0349">Heme</keyword>
<keyword id="KW-0408">Iron</keyword>
<keyword id="KW-0479">Metal-binding</keyword>
<keyword id="KW-0561">Oxygen transport</keyword>
<keyword id="KW-1185">Reference proteome</keyword>
<keyword id="KW-0813">Transport</keyword>